<organism>
    <name type="scientific">African swine fever virus (isolate Tick/Malawi/Lil 20-1/1983)</name>
    <name type="common">ASFV</name>
    <dbReference type="NCBI Taxonomy" id="10500"/>
    <lineage>
        <taxon>Viruses</taxon>
        <taxon>Varidnaviria</taxon>
        <taxon>Bamfordvirae</taxon>
        <taxon>Nucleocytoviricota</taxon>
        <taxon>Pokkesviricetes</taxon>
        <taxon>Asfuvirales</taxon>
        <taxon>Asfarviridae</taxon>
        <taxon>Asfivirus</taxon>
        <taxon>African swine fever virus</taxon>
    </lineage>
</organism>
<comment type="function">
    <text evidence="1">Plays a role in virus cell tropism, and may be required for efficient virus replication in macrophages.</text>
</comment>
<comment type="similarity">
    <text evidence="2">Belongs to the asfivirus MGF 360 family.</text>
</comment>
<reference key="1">
    <citation type="journal article" date="1994" name="Virology">
        <title>Two novel multigene families, 530 and 300, in the terminal variable regions of African swine fever virus genome.</title>
        <authorList>
            <person name="Yozawa T."/>
            <person name="Kutish G.F."/>
            <person name="Afonso C.L."/>
            <person name="Lu Z."/>
            <person name="Rock D.L."/>
        </authorList>
    </citation>
    <scope>NUCLEOTIDE SEQUENCE [GENOMIC DNA]</scope>
</reference>
<reference key="2">
    <citation type="submission" date="2003-03" db="EMBL/GenBank/DDBJ databases">
        <title>African swine fever virus genomes.</title>
        <authorList>
            <person name="Kutish G.F."/>
            <person name="Rock D.L."/>
        </authorList>
    </citation>
    <scope>NUCLEOTIDE SEQUENCE [LARGE SCALE GENOMIC DNA]</scope>
</reference>
<gene>
    <name type="ordered locus">Mal-029</name>
</gene>
<organismHost>
    <name type="scientific">Ornithodoros</name>
    <name type="common">relapsing fever ticks</name>
    <dbReference type="NCBI Taxonomy" id="6937"/>
</organismHost>
<organismHost>
    <name type="scientific">Phacochoerus aethiopicus</name>
    <name type="common">Warthog</name>
    <dbReference type="NCBI Taxonomy" id="85517"/>
</organismHost>
<organismHost>
    <name type="scientific">Phacochoerus africanus</name>
    <name type="common">Warthog</name>
    <dbReference type="NCBI Taxonomy" id="41426"/>
</organismHost>
<organismHost>
    <name type="scientific">Potamochoerus larvatus</name>
    <name type="common">Bushpig</name>
    <dbReference type="NCBI Taxonomy" id="273792"/>
</organismHost>
<organismHost>
    <name type="scientific">Sus scrofa</name>
    <name type="common">Pig</name>
    <dbReference type="NCBI Taxonomy" id="9823"/>
</organismHost>
<keyword id="KW-0040">ANK repeat</keyword>
<name>36010_ASFM2</name>
<feature type="chain" id="PRO_0000373275" description="Protein MGF 360-10L">
    <location>
        <begin position="1"/>
        <end position="355"/>
    </location>
</feature>
<feature type="repeat" description="ANK">
    <location>
        <begin position="57"/>
        <end position="89"/>
    </location>
</feature>
<accession>Q65122</accession>
<evidence type="ECO:0000250" key="1"/>
<evidence type="ECO:0000305" key="2"/>
<proteinExistence type="inferred from homology"/>
<protein>
    <recommendedName>
        <fullName>Protein MGF 360-10L</fullName>
    </recommendedName>
</protein>
<sequence length="355" mass="41910">MFPSLQSFAKKVLARHHVSIDYHYILKHCGLWWYKAPISLDCKHMLIKLPSFADGLDLNTALMLATKENNYQLIKLFTEWGADINYGLICANTPPVREFCWELGAKYQVDKNKVMHMFFKLIHHGTTSSNIILCLKLFNNNPFPTYVIIREIKSSIYWKLRRLVEDTDILSNMSDDDMLTIYCFILALQDNLREAISYFYQHFKHLNTWWLICALCFNKLFDLHDLYEKEKIRMDMDEMMCIACTKDNNFLTIYYCFLLGANINQAMLACVQFYNMDNLFFCIDLGADAFEEAKALADQRNYFLMYHRLSIDIYSPDSSLLTLKEADPKKIYHLLKNYKSKNMMVYFDYDGHDTV</sequence>
<dbReference type="EMBL" id="U03762">
    <property type="protein sequence ID" value="AAA50535.1"/>
    <property type="molecule type" value="Genomic_DNA"/>
</dbReference>
<dbReference type="EMBL" id="AY261361">
    <property type="status" value="NOT_ANNOTATED_CDS"/>
    <property type="molecule type" value="Genomic_DNA"/>
</dbReference>
<dbReference type="SMR" id="Q65122"/>
<dbReference type="Proteomes" id="UP000000860">
    <property type="component" value="Segment"/>
</dbReference>
<dbReference type="GO" id="GO:0042330">
    <property type="term" value="P:taxis"/>
    <property type="evidence" value="ECO:0007669"/>
    <property type="project" value="InterPro"/>
</dbReference>
<dbReference type="InterPro" id="IPR002110">
    <property type="entry name" value="Ankyrin_rpt"/>
</dbReference>
<dbReference type="InterPro" id="IPR036770">
    <property type="entry name" value="Ankyrin_rpt-contain_sf"/>
</dbReference>
<dbReference type="InterPro" id="IPR002595">
    <property type="entry name" value="ASFV_MGF360"/>
</dbReference>
<dbReference type="Pfam" id="PF00023">
    <property type="entry name" value="Ank"/>
    <property type="match status" value="1"/>
</dbReference>
<dbReference type="Pfam" id="PF01671">
    <property type="entry name" value="ASFV_360"/>
    <property type="match status" value="1"/>
</dbReference>
<dbReference type="SUPFAM" id="SSF48403">
    <property type="entry name" value="Ankyrin repeat"/>
    <property type="match status" value="1"/>
</dbReference>
<dbReference type="PROSITE" id="PS50297">
    <property type="entry name" value="ANK_REP_REGION"/>
    <property type="match status" value="1"/>
</dbReference>
<dbReference type="PROSITE" id="PS50088">
    <property type="entry name" value="ANK_REPEAT"/>
    <property type="match status" value="1"/>
</dbReference>